<name>PGK_SULAC</name>
<gene>
    <name evidence="1" type="primary">pgk</name>
    <name type="ordered locus">Saci_1355</name>
</gene>
<protein>
    <recommendedName>
        <fullName evidence="1">Phosphoglycerate kinase</fullName>
        <ecNumber evidence="1">2.7.2.3</ecNumber>
    </recommendedName>
</protein>
<sequence length="415" mass="45457">MIKVSDLVIPTINDLELQNKKVLLRIDVNSPVDKNTGKLLDDSRIKAHSITIKELLKKGNSIVLISHQGRPGDDDFISLKEHSLLLSKYVGTEIEFVEDIIGPYAVEKIKKLDNKGVIMLENIRLMSEELIEAPPQQHAKSFLIKKLSPLFDAYVNDSFSAAHRSQPSLVGFPLVLPSAAGIVMEKEVSALSKIFNYEDSPKIFVLGGGKVNDTLKIIENLIKNRVADRILTGGLVAELFAVAKGINLGKKNMQVLENKGLLSLVPRARKMLLSGAPIEIPVDFVTEQENSQTLEEPTSNLKGTIKDIGNTTIEMYSSFIKESKVVVLRGPMGVIEDERFRRGSKALLTSAVEGPGYVIIGGGHMISMIDKNIQINENKVHVSTGGGALLLFLAGEKLPVLESLHLSWVVRSGKS</sequence>
<evidence type="ECO:0000255" key="1">
    <source>
        <dbReference type="HAMAP-Rule" id="MF_00145"/>
    </source>
</evidence>
<organism>
    <name type="scientific">Sulfolobus acidocaldarius (strain ATCC 33909 / DSM 639 / JCM 8929 / NBRC 15157 / NCIMB 11770)</name>
    <dbReference type="NCBI Taxonomy" id="330779"/>
    <lineage>
        <taxon>Archaea</taxon>
        <taxon>Thermoproteota</taxon>
        <taxon>Thermoprotei</taxon>
        <taxon>Sulfolobales</taxon>
        <taxon>Sulfolobaceae</taxon>
        <taxon>Sulfolobus</taxon>
    </lineage>
</organism>
<proteinExistence type="inferred from homology"/>
<comment type="catalytic activity">
    <reaction evidence="1">
        <text>(2R)-3-phosphoglycerate + ATP = (2R)-3-phospho-glyceroyl phosphate + ADP</text>
        <dbReference type="Rhea" id="RHEA:14801"/>
        <dbReference type="ChEBI" id="CHEBI:30616"/>
        <dbReference type="ChEBI" id="CHEBI:57604"/>
        <dbReference type="ChEBI" id="CHEBI:58272"/>
        <dbReference type="ChEBI" id="CHEBI:456216"/>
        <dbReference type="EC" id="2.7.2.3"/>
    </reaction>
</comment>
<comment type="pathway">
    <text evidence="1">Carbohydrate degradation; glycolysis; pyruvate from D-glyceraldehyde 3-phosphate: step 2/5.</text>
</comment>
<comment type="subunit">
    <text evidence="1">Monomer.</text>
</comment>
<comment type="subcellular location">
    <subcellularLocation>
        <location evidence="1">Cytoplasm</location>
    </subcellularLocation>
</comment>
<comment type="similarity">
    <text evidence="1">Belongs to the phosphoglycerate kinase family.</text>
</comment>
<accession>Q4J939</accession>
<keyword id="KW-0067">ATP-binding</keyword>
<keyword id="KW-0963">Cytoplasm</keyword>
<keyword id="KW-0324">Glycolysis</keyword>
<keyword id="KW-0418">Kinase</keyword>
<keyword id="KW-0547">Nucleotide-binding</keyword>
<keyword id="KW-1185">Reference proteome</keyword>
<keyword id="KW-0808">Transferase</keyword>
<reference key="1">
    <citation type="journal article" date="2005" name="J. Bacteriol.">
        <title>The genome of Sulfolobus acidocaldarius, a model organism of the Crenarchaeota.</title>
        <authorList>
            <person name="Chen L."/>
            <person name="Bruegger K."/>
            <person name="Skovgaard M."/>
            <person name="Redder P."/>
            <person name="She Q."/>
            <person name="Torarinsson E."/>
            <person name="Greve B."/>
            <person name="Awayez M."/>
            <person name="Zibat A."/>
            <person name="Klenk H.-P."/>
            <person name="Garrett R.A."/>
        </authorList>
    </citation>
    <scope>NUCLEOTIDE SEQUENCE [LARGE SCALE GENOMIC DNA]</scope>
    <source>
        <strain>ATCC 33909 / DSM 639 / JCM 8929 / NBRC 15157 / NCIMB 11770</strain>
    </source>
</reference>
<feature type="chain" id="PRO_0000146070" description="Phosphoglycerate kinase">
    <location>
        <begin position="1"/>
        <end position="415"/>
    </location>
</feature>
<feature type="binding site" evidence="1">
    <location>
        <begin position="27"/>
        <end position="29"/>
    </location>
    <ligand>
        <name>substrate</name>
    </ligand>
</feature>
<feature type="binding site" evidence="1">
    <location>
        <position position="44"/>
    </location>
    <ligand>
        <name>substrate</name>
    </ligand>
</feature>
<feature type="binding site" evidence="1">
    <location>
        <begin position="67"/>
        <end position="70"/>
    </location>
    <ligand>
        <name>substrate</name>
    </ligand>
</feature>
<feature type="binding site" evidence="1">
    <location>
        <position position="124"/>
    </location>
    <ligand>
        <name>substrate</name>
    </ligand>
</feature>
<feature type="binding site" evidence="1">
    <location>
        <position position="164"/>
    </location>
    <ligand>
        <name>substrate</name>
    </ligand>
</feature>
<feature type="binding site" evidence="1">
    <location>
        <position position="336"/>
    </location>
    <ligand>
        <name>ATP</name>
        <dbReference type="ChEBI" id="CHEBI:30616"/>
    </ligand>
</feature>
<feature type="binding site" evidence="1">
    <location>
        <begin position="362"/>
        <end position="365"/>
    </location>
    <ligand>
        <name>ATP</name>
        <dbReference type="ChEBI" id="CHEBI:30616"/>
    </ligand>
</feature>
<dbReference type="EC" id="2.7.2.3" evidence="1"/>
<dbReference type="EMBL" id="CP000077">
    <property type="protein sequence ID" value="AAY80690.1"/>
    <property type="molecule type" value="Genomic_DNA"/>
</dbReference>
<dbReference type="RefSeq" id="WP_011278192.1">
    <property type="nucleotide sequence ID" value="NC_007181.1"/>
</dbReference>
<dbReference type="SMR" id="Q4J939"/>
<dbReference type="STRING" id="330779.Saci_1355"/>
<dbReference type="GeneID" id="14551858"/>
<dbReference type="KEGG" id="sai:Saci_1355"/>
<dbReference type="PATRIC" id="fig|330779.12.peg.1308"/>
<dbReference type="eggNOG" id="arCOG00496">
    <property type="taxonomic scope" value="Archaea"/>
</dbReference>
<dbReference type="HOGENOM" id="CLU_025427_0_2_2"/>
<dbReference type="UniPathway" id="UPA00109">
    <property type="reaction ID" value="UER00185"/>
</dbReference>
<dbReference type="Proteomes" id="UP000001018">
    <property type="component" value="Chromosome"/>
</dbReference>
<dbReference type="GO" id="GO:0005829">
    <property type="term" value="C:cytosol"/>
    <property type="evidence" value="ECO:0007669"/>
    <property type="project" value="TreeGrafter"/>
</dbReference>
<dbReference type="GO" id="GO:0043531">
    <property type="term" value="F:ADP binding"/>
    <property type="evidence" value="ECO:0007669"/>
    <property type="project" value="TreeGrafter"/>
</dbReference>
<dbReference type="GO" id="GO:0005524">
    <property type="term" value="F:ATP binding"/>
    <property type="evidence" value="ECO:0007669"/>
    <property type="project" value="UniProtKB-KW"/>
</dbReference>
<dbReference type="GO" id="GO:0004618">
    <property type="term" value="F:phosphoglycerate kinase activity"/>
    <property type="evidence" value="ECO:0007669"/>
    <property type="project" value="UniProtKB-UniRule"/>
</dbReference>
<dbReference type="GO" id="GO:0006094">
    <property type="term" value="P:gluconeogenesis"/>
    <property type="evidence" value="ECO:0007669"/>
    <property type="project" value="TreeGrafter"/>
</dbReference>
<dbReference type="GO" id="GO:0006096">
    <property type="term" value="P:glycolytic process"/>
    <property type="evidence" value="ECO:0007669"/>
    <property type="project" value="UniProtKB-UniRule"/>
</dbReference>
<dbReference type="FunFam" id="3.40.50.1260:FF:000006">
    <property type="entry name" value="Phosphoglycerate kinase"/>
    <property type="match status" value="1"/>
</dbReference>
<dbReference type="FunFam" id="3.40.50.1260:FF:000012">
    <property type="entry name" value="Phosphoglycerate kinase"/>
    <property type="match status" value="1"/>
</dbReference>
<dbReference type="Gene3D" id="3.40.50.1260">
    <property type="entry name" value="Phosphoglycerate kinase, N-terminal domain"/>
    <property type="match status" value="2"/>
</dbReference>
<dbReference type="HAMAP" id="MF_00145">
    <property type="entry name" value="Phosphoglyc_kinase"/>
    <property type="match status" value="1"/>
</dbReference>
<dbReference type="InterPro" id="IPR001576">
    <property type="entry name" value="Phosphoglycerate_kinase"/>
</dbReference>
<dbReference type="InterPro" id="IPR015911">
    <property type="entry name" value="Phosphoglycerate_kinase_CS"/>
</dbReference>
<dbReference type="InterPro" id="IPR015824">
    <property type="entry name" value="Phosphoglycerate_kinase_N"/>
</dbReference>
<dbReference type="InterPro" id="IPR036043">
    <property type="entry name" value="Phosphoglycerate_kinase_sf"/>
</dbReference>
<dbReference type="PANTHER" id="PTHR11406">
    <property type="entry name" value="PHOSPHOGLYCERATE KINASE"/>
    <property type="match status" value="1"/>
</dbReference>
<dbReference type="PANTHER" id="PTHR11406:SF23">
    <property type="entry name" value="PHOSPHOGLYCERATE KINASE 1, CHLOROPLASTIC-RELATED"/>
    <property type="match status" value="1"/>
</dbReference>
<dbReference type="Pfam" id="PF00162">
    <property type="entry name" value="PGK"/>
    <property type="match status" value="1"/>
</dbReference>
<dbReference type="PIRSF" id="PIRSF000724">
    <property type="entry name" value="Pgk"/>
    <property type="match status" value="1"/>
</dbReference>
<dbReference type="PRINTS" id="PR00477">
    <property type="entry name" value="PHGLYCKINASE"/>
</dbReference>
<dbReference type="SUPFAM" id="SSF53748">
    <property type="entry name" value="Phosphoglycerate kinase"/>
    <property type="match status" value="1"/>
</dbReference>
<dbReference type="PROSITE" id="PS00111">
    <property type="entry name" value="PGLYCERATE_KINASE"/>
    <property type="match status" value="1"/>
</dbReference>